<protein>
    <recommendedName>
        <fullName evidence="1">Methionyl-tRNA formyltransferase</fullName>
        <ecNumber evidence="1">2.1.2.9</ecNumber>
    </recommendedName>
</protein>
<evidence type="ECO:0000255" key="1">
    <source>
        <dbReference type="HAMAP-Rule" id="MF_00182"/>
    </source>
</evidence>
<comment type="function">
    <text evidence="1">Attaches a formyl group to the free amino group of methionyl-tRNA(fMet). The formyl group appears to play a dual role in the initiator identity of N-formylmethionyl-tRNA by promoting its recognition by IF2 and preventing the misappropriation of this tRNA by the elongation apparatus.</text>
</comment>
<comment type="catalytic activity">
    <reaction evidence="1">
        <text>L-methionyl-tRNA(fMet) + (6R)-10-formyltetrahydrofolate = N-formyl-L-methionyl-tRNA(fMet) + (6S)-5,6,7,8-tetrahydrofolate + H(+)</text>
        <dbReference type="Rhea" id="RHEA:24380"/>
        <dbReference type="Rhea" id="RHEA-COMP:9952"/>
        <dbReference type="Rhea" id="RHEA-COMP:9953"/>
        <dbReference type="ChEBI" id="CHEBI:15378"/>
        <dbReference type="ChEBI" id="CHEBI:57453"/>
        <dbReference type="ChEBI" id="CHEBI:78530"/>
        <dbReference type="ChEBI" id="CHEBI:78844"/>
        <dbReference type="ChEBI" id="CHEBI:195366"/>
        <dbReference type="EC" id="2.1.2.9"/>
    </reaction>
</comment>
<comment type="similarity">
    <text evidence="1">Belongs to the Fmt family.</text>
</comment>
<reference key="1">
    <citation type="journal article" date="2006" name="Proc. Natl. Acad. Sci. U.S.A.">
        <title>Comparative genomics of the lactic acid bacteria.</title>
        <authorList>
            <person name="Makarova K.S."/>
            <person name="Slesarev A."/>
            <person name="Wolf Y.I."/>
            <person name="Sorokin A."/>
            <person name="Mirkin B."/>
            <person name="Koonin E.V."/>
            <person name="Pavlov A."/>
            <person name="Pavlova N."/>
            <person name="Karamychev V."/>
            <person name="Polouchine N."/>
            <person name="Shakhova V."/>
            <person name="Grigoriev I."/>
            <person name="Lou Y."/>
            <person name="Rohksar D."/>
            <person name="Lucas S."/>
            <person name="Huang K."/>
            <person name="Goodstein D.M."/>
            <person name="Hawkins T."/>
            <person name="Plengvidhya V."/>
            <person name="Welker D."/>
            <person name="Hughes J."/>
            <person name="Goh Y."/>
            <person name="Benson A."/>
            <person name="Baldwin K."/>
            <person name="Lee J.-H."/>
            <person name="Diaz-Muniz I."/>
            <person name="Dosti B."/>
            <person name="Smeianov V."/>
            <person name="Wechter W."/>
            <person name="Barabote R."/>
            <person name="Lorca G."/>
            <person name="Altermann E."/>
            <person name="Barrangou R."/>
            <person name="Ganesan B."/>
            <person name="Xie Y."/>
            <person name="Rawsthorne H."/>
            <person name="Tamir D."/>
            <person name="Parker C."/>
            <person name="Breidt F."/>
            <person name="Broadbent J.R."/>
            <person name="Hutkins R."/>
            <person name="O'Sullivan D."/>
            <person name="Steele J."/>
            <person name="Unlu G."/>
            <person name="Saier M.H. Jr."/>
            <person name="Klaenhammer T."/>
            <person name="Richardson P."/>
            <person name="Kozyavkin S."/>
            <person name="Weimer B.C."/>
            <person name="Mills D.A."/>
        </authorList>
    </citation>
    <scope>NUCLEOTIDE SEQUENCE [LARGE SCALE GENOMIC DNA]</scope>
    <source>
        <strain>ATCC 25745 / CCUG 21536 / LMG 10740 / 183-1w</strain>
    </source>
</reference>
<organism>
    <name type="scientific">Pediococcus pentosaceus (strain ATCC 25745 / CCUG 21536 / LMG 10740 / 183-1w)</name>
    <dbReference type="NCBI Taxonomy" id="278197"/>
    <lineage>
        <taxon>Bacteria</taxon>
        <taxon>Bacillati</taxon>
        <taxon>Bacillota</taxon>
        <taxon>Bacilli</taxon>
        <taxon>Lactobacillales</taxon>
        <taxon>Lactobacillaceae</taxon>
        <taxon>Pediococcus</taxon>
    </lineage>
</organism>
<feature type="chain" id="PRO_1000020119" description="Methionyl-tRNA formyltransferase">
    <location>
        <begin position="1"/>
        <end position="320"/>
    </location>
</feature>
<feature type="binding site" evidence="1">
    <location>
        <begin position="111"/>
        <end position="114"/>
    </location>
    <ligand>
        <name>(6S)-5,6,7,8-tetrahydrofolate</name>
        <dbReference type="ChEBI" id="CHEBI:57453"/>
    </ligand>
</feature>
<keyword id="KW-0648">Protein biosynthesis</keyword>
<keyword id="KW-0808">Transferase</keyword>
<dbReference type="EC" id="2.1.2.9" evidence="1"/>
<dbReference type="EMBL" id="CP000422">
    <property type="protein sequence ID" value="ABJ67889.1"/>
    <property type="molecule type" value="Genomic_DNA"/>
</dbReference>
<dbReference type="RefSeq" id="WP_011673287.1">
    <property type="nucleotide sequence ID" value="NC_008525.1"/>
</dbReference>
<dbReference type="SMR" id="Q03FY3"/>
<dbReference type="STRING" id="278197.PEPE_0829"/>
<dbReference type="GeneID" id="33062700"/>
<dbReference type="KEGG" id="ppe:PEPE_0829"/>
<dbReference type="eggNOG" id="COG0223">
    <property type="taxonomic scope" value="Bacteria"/>
</dbReference>
<dbReference type="HOGENOM" id="CLU_033347_1_1_9"/>
<dbReference type="OrthoDB" id="9802815at2"/>
<dbReference type="Proteomes" id="UP000000773">
    <property type="component" value="Chromosome"/>
</dbReference>
<dbReference type="GO" id="GO:0005829">
    <property type="term" value="C:cytosol"/>
    <property type="evidence" value="ECO:0007669"/>
    <property type="project" value="TreeGrafter"/>
</dbReference>
<dbReference type="GO" id="GO:0004479">
    <property type="term" value="F:methionyl-tRNA formyltransferase activity"/>
    <property type="evidence" value="ECO:0007669"/>
    <property type="project" value="UniProtKB-UniRule"/>
</dbReference>
<dbReference type="CDD" id="cd08646">
    <property type="entry name" value="FMT_core_Met-tRNA-FMT_N"/>
    <property type="match status" value="1"/>
</dbReference>
<dbReference type="CDD" id="cd08704">
    <property type="entry name" value="Met_tRNA_FMT_C"/>
    <property type="match status" value="1"/>
</dbReference>
<dbReference type="FunFam" id="3.40.50.170:FF:000004">
    <property type="entry name" value="Methionyl-tRNA formyltransferase"/>
    <property type="match status" value="1"/>
</dbReference>
<dbReference type="Gene3D" id="3.10.25.10">
    <property type="entry name" value="Formyl transferase, C-terminal domain"/>
    <property type="match status" value="1"/>
</dbReference>
<dbReference type="Gene3D" id="3.40.50.170">
    <property type="entry name" value="Formyl transferase, N-terminal domain"/>
    <property type="match status" value="1"/>
</dbReference>
<dbReference type="HAMAP" id="MF_00182">
    <property type="entry name" value="Formyl_trans"/>
    <property type="match status" value="1"/>
</dbReference>
<dbReference type="InterPro" id="IPR005794">
    <property type="entry name" value="Fmt"/>
</dbReference>
<dbReference type="InterPro" id="IPR005793">
    <property type="entry name" value="Formyl_trans_C"/>
</dbReference>
<dbReference type="InterPro" id="IPR037022">
    <property type="entry name" value="Formyl_trans_C_sf"/>
</dbReference>
<dbReference type="InterPro" id="IPR002376">
    <property type="entry name" value="Formyl_transf_N"/>
</dbReference>
<dbReference type="InterPro" id="IPR036477">
    <property type="entry name" value="Formyl_transf_N_sf"/>
</dbReference>
<dbReference type="InterPro" id="IPR011034">
    <property type="entry name" value="Formyl_transferase-like_C_sf"/>
</dbReference>
<dbReference type="InterPro" id="IPR001555">
    <property type="entry name" value="GART_AS"/>
</dbReference>
<dbReference type="InterPro" id="IPR044135">
    <property type="entry name" value="Met-tRNA-FMT_C"/>
</dbReference>
<dbReference type="InterPro" id="IPR041711">
    <property type="entry name" value="Met-tRNA-FMT_N"/>
</dbReference>
<dbReference type="NCBIfam" id="TIGR00460">
    <property type="entry name" value="fmt"/>
    <property type="match status" value="1"/>
</dbReference>
<dbReference type="PANTHER" id="PTHR11138">
    <property type="entry name" value="METHIONYL-TRNA FORMYLTRANSFERASE"/>
    <property type="match status" value="1"/>
</dbReference>
<dbReference type="PANTHER" id="PTHR11138:SF5">
    <property type="entry name" value="METHIONYL-TRNA FORMYLTRANSFERASE, MITOCHONDRIAL"/>
    <property type="match status" value="1"/>
</dbReference>
<dbReference type="Pfam" id="PF02911">
    <property type="entry name" value="Formyl_trans_C"/>
    <property type="match status" value="1"/>
</dbReference>
<dbReference type="Pfam" id="PF00551">
    <property type="entry name" value="Formyl_trans_N"/>
    <property type="match status" value="1"/>
</dbReference>
<dbReference type="SUPFAM" id="SSF50486">
    <property type="entry name" value="FMT C-terminal domain-like"/>
    <property type="match status" value="1"/>
</dbReference>
<dbReference type="SUPFAM" id="SSF53328">
    <property type="entry name" value="Formyltransferase"/>
    <property type="match status" value="1"/>
</dbReference>
<dbReference type="PROSITE" id="PS00373">
    <property type="entry name" value="GART"/>
    <property type="match status" value="1"/>
</dbReference>
<sequence length="320" mass="35161">MKSIIFMGTPEFSAPILQSLIDEPNYDVIGVVTQPDRKVGRKHVLTPSPVKKVAVKNDIKVYQPEKLSGSAELTELIALNADLIVTAAFGQFLPMSLINSVKIGAVNVHASLLPKYRGGAPVHYAIMNGDKETGVTIIYMVKKMDAGEMLATAKIPITDQDDVGTMFEKLSLLGRDLLLDTLPQLIEGNVQPVKQDEEQVSFSPNISPEEEEIDINLPARLVDAKVRGLRPFPVAYFMMEGKRTKIWKTKVIDQTTDLKPGQVVSKTKHELLVATGEHGVISIEELQPAGKQKMTITDYLNGVGENLHPGKQIIDNDKSK</sequence>
<proteinExistence type="inferred from homology"/>
<accession>Q03FY3</accession>
<gene>
    <name evidence="1" type="primary">fmt</name>
    <name type="ordered locus">PEPE_0829</name>
</gene>
<name>FMT_PEDPA</name>